<sequence>MLQMPSKQPISAGIVIVAAGRGERAGSSKEGPKQYRMIGGKPVIVHTLENFMTWEPATEIVVVIHPDDEALFARALRHIISATPIETVHGGPTRQQSVLAGLRHLKDKRISHVLIHDAVRPFFDHVLLDRIAESLDNGAQAVLPAIPVTDTLKRADSAGTVLTTVSREHLYAAQTPQSFAFETILDAHEKAAASGRSDFTDDASIAEWAGIPVTIVAGTPDNVKLTVKKDIAMADDKLSASLLPDVRTGNGYDVHQLEAGDGVTLCGVFIPHDQKLKGHSDADVALHALTDALLATCGAGDIGDHFPPSDPQWKGAASRIFIEHAARIVREHGGTIMNADVSLIAEAPKVGPHRESMRMRLSEYLGIDIERCSVKATTNETIGFVGRREGIAAIATATVVYRGVKR</sequence>
<dbReference type="EC" id="2.7.7.60" evidence="1"/>
<dbReference type="EC" id="4.6.1.12" evidence="1"/>
<dbReference type="EMBL" id="CP001191">
    <property type="protein sequence ID" value="ACI54906.1"/>
    <property type="molecule type" value="Genomic_DNA"/>
</dbReference>
<dbReference type="RefSeq" id="WP_012557568.1">
    <property type="nucleotide sequence ID" value="NC_011369.1"/>
</dbReference>
<dbReference type="SMR" id="B5ZNB6"/>
<dbReference type="STRING" id="395492.Rleg2_1616"/>
<dbReference type="KEGG" id="rlt:Rleg2_1616"/>
<dbReference type="eggNOG" id="COG0245">
    <property type="taxonomic scope" value="Bacteria"/>
</dbReference>
<dbReference type="eggNOG" id="COG1211">
    <property type="taxonomic scope" value="Bacteria"/>
</dbReference>
<dbReference type="HOGENOM" id="CLU_042800_1_0_5"/>
<dbReference type="UniPathway" id="UPA00056">
    <property type="reaction ID" value="UER00093"/>
</dbReference>
<dbReference type="UniPathway" id="UPA00056">
    <property type="reaction ID" value="UER00095"/>
</dbReference>
<dbReference type="Proteomes" id="UP000008330">
    <property type="component" value="Chromosome"/>
</dbReference>
<dbReference type="GO" id="GO:0008685">
    <property type="term" value="F:2-C-methyl-D-erythritol 2,4-cyclodiphosphate synthase activity"/>
    <property type="evidence" value="ECO:0007669"/>
    <property type="project" value="UniProtKB-UniRule"/>
</dbReference>
<dbReference type="GO" id="GO:0050518">
    <property type="term" value="F:2-C-methyl-D-erythritol 4-phosphate cytidylyltransferase activity"/>
    <property type="evidence" value="ECO:0007669"/>
    <property type="project" value="UniProtKB-UniRule"/>
</dbReference>
<dbReference type="GO" id="GO:0046872">
    <property type="term" value="F:metal ion binding"/>
    <property type="evidence" value="ECO:0007669"/>
    <property type="project" value="UniProtKB-KW"/>
</dbReference>
<dbReference type="GO" id="GO:0019288">
    <property type="term" value="P:isopentenyl diphosphate biosynthetic process, methylerythritol 4-phosphate pathway"/>
    <property type="evidence" value="ECO:0007669"/>
    <property type="project" value="UniProtKB-UniRule"/>
</dbReference>
<dbReference type="GO" id="GO:0016114">
    <property type="term" value="P:terpenoid biosynthetic process"/>
    <property type="evidence" value="ECO:0007669"/>
    <property type="project" value="InterPro"/>
</dbReference>
<dbReference type="CDD" id="cd02516">
    <property type="entry name" value="CDP-ME_synthetase"/>
    <property type="match status" value="1"/>
</dbReference>
<dbReference type="CDD" id="cd00554">
    <property type="entry name" value="MECDP_synthase"/>
    <property type="match status" value="1"/>
</dbReference>
<dbReference type="FunFam" id="3.90.550.10:FF:000003">
    <property type="entry name" value="2-C-methyl-D-erythritol 4-phosphate cytidylyltransferase"/>
    <property type="match status" value="1"/>
</dbReference>
<dbReference type="Gene3D" id="3.30.1330.50">
    <property type="entry name" value="2-C-methyl-D-erythritol 2,4-cyclodiphosphate synthase"/>
    <property type="match status" value="1"/>
</dbReference>
<dbReference type="Gene3D" id="3.90.550.10">
    <property type="entry name" value="Spore Coat Polysaccharide Biosynthesis Protein SpsA, Chain A"/>
    <property type="match status" value="1"/>
</dbReference>
<dbReference type="HAMAP" id="MF_00108">
    <property type="entry name" value="IspD"/>
    <property type="match status" value="1"/>
</dbReference>
<dbReference type="HAMAP" id="MF_01520">
    <property type="entry name" value="IspDF"/>
    <property type="match status" value="1"/>
</dbReference>
<dbReference type="HAMAP" id="MF_00107">
    <property type="entry name" value="IspF"/>
    <property type="match status" value="1"/>
</dbReference>
<dbReference type="InterPro" id="IPR001228">
    <property type="entry name" value="IspD"/>
</dbReference>
<dbReference type="InterPro" id="IPR026596">
    <property type="entry name" value="IspD/F"/>
</dbReference>
<dbReference type="InterPro" id="IPR034683">
    <property type="entry name" value="IspD/TarI"/>
</dbReference>
<dbReference type="InterPro" id="IPR018294">
    <property type="entry name" value="ISPD_synthase_CS"/>
</dbReference>
<dbReference type="InterPro" id="IPR003526">
    <property type="entry name" value="MECDP_synthase"/>
</dbReference>
<dbReference type="InterPro" id="IPR020555">
    <property type="entry name" value="MECDP_synthase_CS"/>
</dbReference>
<dbReference type="InterPro" id="IPR036571">
    <property type="entry name" value="MECDP_synthase_sf"/>
</dbReference>
<dbReference type="InterPro" id="IPR029044">
    <property type="entry name" value="Nucleotide-diphossugar_trans"/>
</dbReference>
<dbReference type="NCBIfam" id="TIGR00453">
    <property type="entry name" value="ispD"/>
    <property type="match status" value="1"/>
</dbReference>
<dbReference type="NCBIfam" id="TIGR00151">
    <property type="entry name" value="ispF"/>
    <property type="match status" value="1"/>
</dbReference>
<dbReference type="NCBIfam" id="NF006899">
    <property type="entry name" value="PRK09382.1"/>
    <property type="match status" value="1"/>
</dbReference>
<dbReference type="PANTHER" id="PTHR43181">
    <property type="entry name" value="2-C-METHYL-D-ERYTHRITOL 2,4-CYCLODIPHOSPHATE SYNTHASE, CHLOROPLASTIC"/>
    <property type="match status" value="1"/>
</dbReference>
<dbReference type="PANTHER" id="PTHR43181:SF1">
    <property type="entry name" value="2-C-METHYL-D-ERYTHRITOL 2,4-CYCLODIPHOSPHATE SYNTHASE, CHLOROPLASTIC"/>
    <property type="match status" value="1"/>
</dbReference>
<dbReference type="Pfam" id="PF01128">
    <property type="entry name" value="IspD"/>
    <property type="match status" value="1"/>
</dbReference>
<dbReference type="Pfam" id="PF02542">
    <property type="entry name" value="YgbB"/>
    <property type="match status" value="1"/>
</dbReference>
<dbReference type="SUPFAM" id="SSF69765">
    <property type="entry name" value="IpsF-like"/>
    <property type="match status" value="1"/>
</dbReference>
<dbReference type="SUPFAM" id="SSF53448">
    <property type="entry name" value="Nucleotide-diphospho-sugar transferases"/>
    <property type="match status" value="1"/>
</dbReference>
<dbReference type="PROSITE" id="PS01295">
    <property type="entry name" value="ISPD"/>
    <property type="match status" value="1"/>
</dbReference>
<dbReference type="PROSITE" id="PS01350">
    <property type="entry name" value="ISPF"/>
    <property type="match status" value="1"/>
</dbReference>
<protein>
    <recommendedName>
        <fullName evidence="1">Bifunctional enzyme IspD/IspF</fullName>
    </recommendedName>
    <domain>
        <recommendedName>
            <fullName evidence="1">2-C-methyl-D-erythritol 4-phosphate cytidylyltransferase</fullName>
            <ecNumber evidence="1">2.7.7.60</ecNumber>
        </recommendedName>
        <alternativeName>
            <fullName evidence="1">4-diphosphocytidyl-2C-methyl-D-erythritol synthase</fullName>
        </alternativeName>
        <alternativeName>
            <fullName evidence="1">MEP cytidylyltransferase</fullName>
            <shortName evidence="1">MCT</shortName>
        </alternativeName>
    </domain>
    <domain>
        <recommendedName>
            <fullName evidence="1">2-C-methyl-D-erythritol 2,4-cyclodiphosphate synthase</fullName>
            <shortName evidence="1">MECDP-synthase</shortName>
            <shortName evidence="1">MECPP-synthase</shortName>
            <shortName evidence="1">MECPS</shortName>
            <ecNumber evidence="1">4.6.1.12</ecNumber>
        </recommendedName>
    </domain>
</protein>
<comment type="function">
    <text evidence="1">Bifunctional enzyme that catalyzes the formation of 4-diphosphocytidyl-2-C-methyl-D-erythritol from CTP and 2-C-methyl-D-erythritol 4-phosphate (MEP) (IspD), and catalyzes the conversion of 4-diphosphocytidyl-2-C-methyl-D-erythritol 2-phosphate (CDP-ME2P) to 2-C-methyl-D-erythritol 2,4-cyclodiphosphate (ME-CPP) with a corresponding release of cytidine 5-monophosphate (CMP) (IspF).</text>
</comment>
<comment type="catalytic activity">
    <reaction evidence="1">
        <text>2-C-methyl-D-erythritol 4-phosphate + CTP + H(+) = 4-CDP-2-C-methyl-D-erythritol + diphosphate</text>
        <dbReference type="Rhea" id="RHEA:13429"/>
        <dbReference type="ChEBI" id="CHEBI:15378"/>
        <dbReference type="ChEBI" id="CHEBI:33019"/>
        <dbReference type="ChEBI" id="CHEBI:37563"/>
        <dbReference type="ChEBI" id="CHEBI:57823"/>
        <dbReference type="ChEBI" id="CHEBI:58262"/>
        <dbReference type="EC" id="2.7.7.60"/>
    </reaction>
</comment>
<comment type="catalytic activity">
    <reaction evidence="1">
        <text>4-CDP-2-C-methyl-D-erythritol 2-phosphate = 2-C-methyl-D-erythritol 2,4-cyclic diphosphate + CMP</text>
        <dbReference type="Rhea" id="RHEA:23864"/>
        <dbReference type="ChEBI" id="CHEBI:57919"/>
        <dbReference type="ChEBI" id="CHEBI:58483"/>
        <dbReference type="ChEBI" id="CHEBI:60377"/>
        <dbReference type="EC" id="4.6.1.12"/>
    </reaction>
</comment>
<comment type="cofactor">
    <cofactor evidence="1">
        <name>a divalent metal cation</name>
        <dbReference type="ChEBI" id="CHEBI:60240"/>
    </cofactor>
</comment>
<comment type="pathway">
    <text evidence="1">Isoprenoid biosynthesis; isopentenyl diphosphate biosynthesis via DXP pathway; isopentenyl diphosphate from 1-deoxy-D-xylulose 5-phosphate: step 2/6.</text>
</comment>
<comment type="pathway">
    <text evidence="1">Isoprenoid biosynthesis; isopentenyl diphosphate biosynthesis via DXP pathway; isopentenyl diphosphate from 1-deoxy-D-xylulose 5-phosphate: step 4/6.</text>
</comment>
<comment type="similarity">
    <text evidence="1">In the N-terminal section; belongs to the IspD/TarI cytidylyltransferase family. IspD subfamily.</text>
</comment>
<comment type="similarity">
    <text evidence="1">In the C-terminal section; belongs to the IspF family.</text>
</comment>
<gene>
    <name evidence="1" type="primary">ispDF</name>
    <name type="ordered locus">Rleg2_1616</name>
</gene>
<feature type="chain" id="PRO_1000191078" description="Bifunctional enzyme IspD/IspF">
    <location>
        <begin position="1"/>
        <end position="406"/>
    </location>
</feature>
<feature type="region of interest" description="2-C-methyl-D-erythritol 4-phosphate cytidylyltransferase" evidence="1">
    <location>
        <begin position="1"/>
        <end position="246"/>
    </location>
</feature>
<feature type="region of interest" description="2-C-methyl-D-erythritol 2,4-cyclodiphosphate synthase" evidence="1">
    <location>
        <begin position="247"/>
        <end position="406"/>
    </location>
</feature>
<feature type="binding site" evidence="1">
    <location>
        <begin position="253"/>
        <end position="255"/>
    </location>
    <ligand>
        <name>4-CDP-2-C-methyl-D-erythritol 2-phosphate</name>
        <dbReference type="ChEBI" id="CHEBI:57919"/>
    </ligand>
</feature>
<feature type="binding site" evidence="1">
    <location>
        <position position="253"/>
    </location>
    <ligand>
        <name>a divalent metal cation</name>
        <dbReference type="ChEBI" id="CHEBI:60240"/>
    </ligand>
</feature>
<feature type="binding site" evidence="1">
    <location>
        <position position="255"/>
    </location>
    <ligand>
        <name>a divalent metal cation</name>
        <dbReference type="ChEBI" id="CHEBI:60240"/>
    </ligand>
</feature>
<feature type="binding site" evidence="1">
    <location>
        <begin position="279"/>
        <end position="280"/>
    </location>
    <ligand>
        <name>4-CDP-2-C-methyl-D-erythritol 2-phosphate</name>
        <dbReference type="ChEBI" id="CHEBI:57919"/>
    </ligand>
</feature>
<feature type="binding site" evidence="1">
    <location>
        <position position="287"/>
    </location>
    <ligand>
        <name>a divalent metal cation</name>
        <dbReference type="ChEBI" id="CHEBI:60240"/>
    </ligand>
</feature>
<feature type="binding site" evidence="1">
    <location>
        <begin position="301"/>
        <end position="303"/>
    </location>
    <ligand>
        <name>4-CDP-2-C-methyl-D-erythritol 2-phosphate</name>
        <dbReference type="ChEBI" id="CHEBI:57919"/>
    </ligand>
</feature>
<feature type="binding site" evidence="1">
    <location>
        <begin position="377"/>
        <end position="380"/>
    </location>
    <ligand>
        <name>4-CDP-2-C-methyl-D-erythritol 2-phosphate</name>
        <dbReference type="ChEBI" id="CHEBI:57919"/>
    </ligand>
</feature>
<feature type="binding site" evidence="1">
    <location>
        <position position="384"/>
    </location>
    <ligand>
        <name>4-CDP-2-C-methyl-D-erythritol 2-phosphate</name>
        <dbReference type="ChEBI" id="CHEBI:57919"/>
    </ligand>
</feature>
<feature type="binding site" evidence="1">
    <location>
        <position position="387"/>
    </location>
    <ligand>
        <name>4-CDP-2-C-methyl-D-erythritol 2-phosphate</name>
        <dbReference type="ChEBI" id="CHEBI:57919"/>
    </ligand>
</feature>
<feature type="site" description="Transition state stabilizer" evidence="1">
    <location>
        <position position="24"/>
    </location>
</feature>
<feature type="site" description="Transition state stabilizer" evidence="1">
    <location>
        <position position="33"/>
    </location>
</feature>
<feature type="site" description="Positions MEP for the nucleophilic attack" evidence="1">
    <location>
        <position position="167"/>
    </location>
</feature>
<feature type="site" description="Positions MEP for the nucleophilic attack" evidence="1">
    <location>
        <position position="224"/>
    </location>
</feature>
<feature type="site" description="Transition state stabilizer" evidence="1">
    <location>
        <position position="279"/>
    </location>
</feature>
<feature type="site" description="Transition state stabilizer" evidence="1">
    <location>
        <position position="378"/>
    </location>
</feature>
<accession>B5ZNB6</accession>
<proteinExistence type="inferred from homology"/>
<organism>
    <name type="scientific">Rhizobium leguminosarum bv. trifolii (strain WSM2304)</name>
    <dbReference type="NCBI Taxonomy" id="395492"/>
    <lineage>
        <taxon>Bacteria</taxon>
        <taxon>Pseudomonadati</taxon>
        <taxon>Pseudomonadota</taxon>
        <taxon>Alphaproteobacteria</taxon>
        <taxon>Hyphomicrobiales</taxon>
        <taxon>Rhizobiaceae</taxon>
        <taxon>Rhizobium/Agrobacterium group</taxon>
        <taxon>Rhizobium</taxon>
    </lineage>
</organism>
<reference key="1">
    <citation type="journal article" date="2010" name="Stand. Genomic Sci.">
        <title>Complete genome sequence of Rhizobium leguminosarum bv trifolii strain WSM2304, an effective microsymbiont of the South American clover Trifolium polymorphum.</title>
        <authorList>
            <person name="Reeve W."/>
            <person name="O'Hara G."/>
            <person name="Chain P."/>
            <person name="Ardley J."/>
            <person name="Brau L."/>
            <person name="Nandesena K."/>
            <person name="Tiwari R."/>
            <person name="Malfatti S."/>
            <person name="Kiss H."/>
            <person name="Lapidus A."/>
            <person name="Copeland A."/>
            <person name="Nolan M."/>
            <person name="Land M."/>
            <person name="Ivanova N."/>
            <person name="Mavromatis K."/>
            <person name="Markowitz V."/>
            <person name="Kyrpides N."/>
            <person name="Melino V."/>
            <person name="Denton M."/>
            <person name="Yates R."/>
            <person name="Howieson J."/>
        </authorList>
    </citation>
    <scope>NUCLEOTIDE SEQUENCE [LARGE SCALE GENOMIC DNA]</scope>
    <source>
        <strain>WSM2304</strain>
    </source>
</reference>
<name>ISPDF_RHILW</name>
<keyword id="KW-0414">Isoprene biosynthesis</keyword>
<keyword id="KW-0456">Lyase</keyword>
<keyword id="KW-0479">Metal-binding</keyword>
<keyword id="KW-0511">Multifunctional enzyme</keyword>
<keyword id="KW-0548">Nucleotidyltransferase</keyword>
<keyword id="KW-1185">Reference proteome</keyword>
<keyword id="KW-0808">Transferase</keyword>
<evidence type="ECO:0000255" key="1">
    <source>
        <dbReference type="HAMAP-Rule" id="MF_01520"/>
    </source>
</evidence>